<name>RHO_SALTI</name>
<comment type="function">
    <text evidence="1">Facilitates transcription termination by a mechanism that involves Rho binding to the nascent RNA, activation of Rho's RNA-dependent ATPase activity, and release of the mRNA from the DNA template.</text>
</comment>
<comment type="subunit">
    <text evidence="1">Homohexamer. The homohexamer assembles into an open ring structure.</text>
</comment>
<comment type="similarity">
    <text evidence="1">Belongs to the Rho family.</text>
</comment>
<accession>P0A296</accession>
<accession>P26980</accession>
<accession>Q93V24</accession>
<evidence type="ECO:0000255" key="1">
    <source>
        <dbReference type="HAMAP-Rule" id="MF_01884"/>
    </source>
</evidence>
<evidence type="ECO:0000255" key="2">
    <source>
        <dbReference type="PROSITE-ProRule" id="PRU01203"/>
    </source>
</evidence>
<gene>
    <name evidence="1" type="primary">rho</name>
    <name type="ordered locus">STY3638</name>
    <name type="ordered locus">t3380</name>
</gene>
<dbReference type="EC" id="3.6.4.-" evidence="1"/>
<dbReference type="EMBL" id="AL513382">
    <property type="protein sequence ID" value="CAD09399.1"/>
    <property type="molecule type" value="Genomic_DNA"/>
</dbReference>
<dbReference type="EMBL" id="AE014613">
    <property type="protein sequence ID" value="AAO70904.1"/>
    <property type="molecule type" value="Genomic_DNA"/>
</dbReference>
<dbReference type="RefSeq" id="NP_457830.1">
    <property type="nucleotide sequence ID" value="NC_003198.1"/>
</dbReference>
<dbReference type="RefSeq" id="WP_001054532.1">
    <property type="nucleotide sequence ID" value="NZ_WSUR01000032.1"/>
</dbReference>
<dbReference type="SMR" id="P0A296"/>
<dbReference type="STRING" id="220341.gene:17587494"/>
<dbReference type="GeneID" id="66758203"/>
<dbReference type="KEGG" id="stt:t3380"/>
<dbReference type="KEGG" id="sty:STY3638"/>
<dbReference type="PATRIC" id="fig|220341.7.peg.3707"/>
<dbReference type="eggNOG" id="COG1158">
    <property type="taxonomic scope" value="Bacteria"/>
</dbReference>
<dbReference type="HOGENOM" id="CLU_016377_4_3_6"/>
<dbReference type="OMA" id="LCRAHNN"/>
<dbReference type="OrthoDB" id="9805197at2"/>
<dbReference type="Proteomes" id="UP000000541">
    <property type="component" value="Chromosome"/>
</dbReference>
<dbReference type="Proteomes" id="UP000002670">
    <property type="component" value="Chromosome"/>
</dbReference>
<dbReference type="GO" id="GO:0005829">
    <property type="term" value="C:cytosol"/>
    <property type="evidence" value="ECO:0007669"/>
    <property type="project" value="UniProtKB-ARBA"/>
</dbReference>
<dbReference type="GO" id="GO:0005524">
    <property type="term" value="F:ATP binding"/>
    <property type="evidence" value="ECO:0007669"/>
    <property type="project" value="UniProtKB-UniRule"/>
</dbReference>
<dbReference type="GO" id="GO:0016887">
    <property type="term" value="F:ATP hydrolysis activity"/>
    <property type="evidence" value="ECO:0007669"/>
    <property type="project" value="InterPro"/>
</dbReference>
<dbReference type="GO" id="GO:0008186">
    <property type="term" value="F:ATP-dependent activity, acting on RNA"/>
    <property type="evidence" value="ECO:0007669"/>
    <property type="project" value="InterPro"/>
</dbReference>
<dbReference type="GO" id="GO:0004386">
    <property type="term" value="F:helicase activity"/>
    <property type="evidence" value="ECO:0007669"/>
    <property type="project" value="UniProtKB-UniRule"/>
</dbReference>
<dbReference type="GO" id="GO:0003723">
    <property type="term" value="F:RNA binding"/>
    <property type="evidence" value="ECO:0007669"/>
    <property type="project" value="UniProtKB-UniRule"/>
</dbReference>
<dbReference type="GO" id="GO:0006353">
    <property type="term" value="P:DNA-templated transcription termination"/>
    <property type="evidence" value="ECO:0007669"/>
    <property type="project" value="UniProtKB-UniRule"/>
</dbReference>
<dbReference type="CDD" id="cd04459">
    <property type="entry name" value="Rho_CSD"/>
    <property type="match status" value="1"/>
</dbReference>
<dbReference type="CDD" id="cd01128">
    <property type="entry name" value="rho_factor_C"/>
    <property type="match status" value="1"/>
</dbReference>
<dbReference type="FunFam" id="1.10.720.10:FF:000001">
    <property type="entry name" value="Transcription termination factor Rho"/>
    <property type="match status" value="1"/>
</dbReference>
<dbReference type="FunFam" id="2.40.50.140:FF:000010">
    <property type="entry name" value="Transcription termination factor Rho"/>
    <property type="match status" value="1"/>
</dbReference>
<dbReference type="FunFam" id="3.40.50.300:FF:000072">
    <property type="entry name" value="Transcription termination factor Rho"/>
    <property type="match status" value="1"/>
</dbReference>
<dbReference type="Gene3D" id="1.10.720.10">
    <property type="match status" value="1"/>
</dbReference>
<dbReference type="Gene3D" id="2.40.50.140">
    <property type="entry name" value="Nucleic acid-binding proteins"/>
    <property type="match status" value="1"/>
</dbReference>
<dbReference type="Gene3D" id="3.40.50.300">
    <property type="entry name" value="P-loop containing nucleotide triphosphate hydrolases"/>
    <property type="match status" value="1"/>
</dbReference>
<dbReference type="HAMAP" id="MF_01884">
    <property type="entry name" value="Rho"/>
    <property type="match status" value="1"/>
</dbReference>
<dbReference type="InterPro" id="IPR003593">
    <property type="entry name" value="AAA+_ATPase"/>
</dbReference>
<dbReference type="InterPro" id="IPR000194">
    <property type="entry name" value="ATPase_F1/V1/A1_a/bsu_nucl-bd"/>
</dbReference>
<dbReference type="InterPro" id="IPR011129">
    <property type="entry name" value="CSD"/>
</dbReference>
<dbReference type="InterPro" id="IPR012340">
    <property type="entry name" value="NA-bd_OB-fold"/>
</dbReference>
<dbReference type="InterPro" id="IPR027417">
    <property type="entry name" value="P-loop_NTPase"/>
</dbReference>
<dbReference type="InterPro" id="IPR011112">
    <property type="entry name" value="Rho-like_N"/>
</dbReference>
<dbReference type="InterPro" id="IPR041703">
    <property type="entry name" value="Rho_factor_ATP-bd"/>
</dbReference>
<dbReference type="InterPro" id="IPR036269">
    <property type="entry name" value="Rho_N_sf"/>
</dbReference>
<dbReference type="InterPro" id="IPR011113">
    <property type="entry name" value="Rho_RNA-bd"/>
</dbReference>
<dbReference type="InterPro" id="IPR004665">
    <property type="entry name" value="Term_rho"/>
</dbReference>
<dbReference type="NCBIfam" id="NF006886">
    <property type="entry name" value="PRK09376.1"/>
    <property type="match status" value="1"/>
</dbReference>
<dbReference type="NCBIfam" id="TIGR00767">
    <property type="entry name" value="rho"/>
    <property type="match status" value="1"/>
</dbReference>
<dbReference type="PANTHER" id="PTHR46425">
    <property type="entry name" value="TRANSCRIPTION TERMINATION FACTOR RHO"/>
    <property type="match status" value="1"/>
</dbReference>
<dbReference type="PANTHER" id="PTHR46425:SF1">
    <property type="entry name" value="TRANSCRIPTION TERMINATION FACTOR RHO"/>
    <property type="match status" value="1"/>
</dbReference>
<dbReference type="Pfam" id="PF00006">
    <property type="entry name" value="ATP-synt_ab"/>
    <property type="match status" value="1"/>
</dbReference>
<dbReference type="Pfam" id="PF07498">
    <property type="entry name" value="Rho_N"/>
    <property type="match status" value="1"/>
</dbReference>
<dbReference type="Pfam" id="PF07497">
    <property type="entry name" value="Rho_RNA_bind"/>
    <property type="match status" value="1"/>
</dbReference>
<dbReference type="SMART" id="SM00382">
    <property type="entry name" value="AAA"/>
    <property type="match status" value="1"/>
</dbReference>
<dbReference type="SMART" id="SM00357">
    <property type="entry name" value="CSP"/>
    <property type="match status" value="1"/>
</dbReference>
<dbReference type="SMART" id="SM00959">
    <property type="entry name" value="Rho_N"/>
    <property type="match status" value="1"/>
</dbReference>
<dbReference type="SUPFAM" id="SSF50249">
    <property type="entry name" value="Nucleic acid-binding proteins"/>
    <property type="match status" value="1"/>
</dbReference>
<dbReference type="SUPFAM" id="SSF52540">
    <property type="entry name" value="P-loop containing nucleoside triphosphate hydrolases"/>
    <property type="match status" value="1"/>
</dbReference>
<dbReference type="SUPFAM" id="SSF68912">
    <property type="entry name" value="Rho N-terminal domain-like"/>
    <property type="match status" value="1"/>
</dbReference>
<dbReference type="PROSITE" id="PS51856">
    <property type="entry name" value="RHO_RNA_BD"/>
    <property type="match status" value="1"/>
</dbReference>
<keyword id="KW-0067">ATP-binding</keyword>
<keyword id="KW-0347">Helicase</keyword>
<keyword id="KW-0378">Hydrolase</keyword>
<keyword id="KW-0547">Nucleotide-binding</keyword>
<keyword id="KW-0694">RNA-binding</keyword>
<keyword id="KW-0804">Transcription</keyword>
<keyword id="KW-0805">Transcription regulation</keyword>
<keyword id="KW-0806">Transcription termination</keyword>
<proteinExistence type="inferred from homology"/>
<reference key="1">
    <citation type="journal article" date="2001" name="Nature">
        <title>Complete genome sequence of a multiple drug resistant Salmonella enterica serovar Typhi CT18.</title>
        <authorList>
            <person name="Parkhill J."/>
            <person name="Dougan G."/>
            <person name="James K.D."/>
            <person name="Thomson N.R."/>
            <person name="Pickard D."/>
            <person name="Wain J."/>
            <person name="Churcher C.M."/>
            <person name="Mungall K.L."/>
            <person name="Bentley S.D."/>
            <person name="Holden M.T.G."/>
            <person name="Sebaihia M."/>
            <person name="Baker S."/>
            <person name="Basham D."/>
            <person name="Brooks K."/>
            <person name="Chillingworth T."/>
            <person name="Connerton P."/>
            <person name="Cronin A."/>
            <person name="Davis P."/>
            <person name="Davies R.M."/>
            <person name="Dowd L."/>
            <person name="White N."/>
            <person name="Farrar J."/>
            <person name="Feltwell T."/>
            <person name="Hamlin N."/>
            <person name="Haque A."/>
            <person name="Hien T.T."/>
            <person name="Holroyd S."/>
            <person name="Jagels K."/>
            <person name="Krogh A."/>
            <person name="Larsen T.S."/>
            <person name="Leather S."/>
            <person name="Moule S."/>
            <person name="O'Gaora P."/>
            <person name="Parry C."/>
            <person name="Quail M.A."/>
            <person name="Rutherford K.M."/>
            <person name="Simmonds M."/>
            <person name="Skelton J."/>
            <person name="Stevens K."/>
            <person name="Whitehead S."/>
            <person name="Barrell B.G."/>
        </authorList>
    </citation>
    <scope>NUCLEOTIDE SEQUENCE [LARGE SCALE GENOMIC DNA]</scope>
    <source>
        <strain>CT18</strain>
    </source>
</reference>
<reference key="2">
    <citation type="journal article" date="2003" name="J. Bacteriol.">
        <title>Comparative genomics of Salmonella enterica serovar Typhi strains Ty2 and CT18.</title>
        <authorList>
            <person name="Deng W."/>
            <person name="Liou S.-R."/>
            <person name="Plunkett G. III"/>
            <person name="Mayhew G.F."/>
            <person name="Rose D.J."/>
            <person name="Burland V."/>
            <person name="Kodoyianni V."/>
            <person name="Schwartz D.C."/>
            <person name="Blattner F.R."/>
        </authorList>
    </citation>
    <scope>NUCLEOTIDE SEQUENCE [LARGE SCALE GENOMIC DNA]</scope>
    <source>
        <strain>ATCC 700931 / Ty2</strain>
    </source>
</reference>
<organism>
    <name type="scientific">Salmonella typhi</name>
    <dbReference type="NCBI Taxonomy" id="90370"/>
    <lineage>
        <taxon>Bacteria</taxon>
        <taxon>Pseudomonadati</taxon>
        <taxon>Pseudomonadota</taxon>
        <taxon>Gammaproteobacteria</taxon>
        <taxon>Enterobacterales</taxon>
        <taxon>Enterobacteriaceae</taxon>
        <taxon>Salmonella</taxon>
    </lineage>
</organism>
<feature type="chain" id="PRO_0000188976" description="Transcription termination factor Rho">
    <location>
        <begin position="1"/>
        <end position="419"/>
    </location>
</feature>
<feature type="domain" description="Rho RNA-BD" evidence="2">
    <location>
        <begin position="48"/>
        <end position="123"/>
    </location>
</feature>
<feature type="region of interest" description="RNA-binding 1" evidence="1">
    <location>
        <begin position="61"/>
        <end position="66"/>
    </location>
</feature>
<feature type="region of interest" description="RNA-binding 1" evidence="1">
    <location>
        <begin position="78"/>
        <end position="80"/>
    </location>
</feature>
<feature type="region of interest" description="RNA-binding 1" evidence="1">
    <location>
        <begin position="108"/>
        <end position="110"/>
    </location>
</feature>
<feature type="region of interest" description="RNA-binding 2" evidence="1">
    <location>
        <begin position="284"/>
        <end position="288"/>
    </location>
</feature>
<feature type="binding site" evidence="1">
    <location>
        <begin position="169"/>
        <end position="174"/>
    </location>
    <ligand>
        <name>ATP</name>
        <dbReference type="ChEBI" id="CHEBI:30616"/>
    </ligand>
</feature>
<feature type="binding site" evidence="1">
    <location>
        <begin position="181"/>
        <end position="186"/>
    </location>
    <ligand>
        <name>ATP</name>
        <dbReference type="ChEBI" id="CHEBI:30616"/>
    </ligand>
</feature>
<feature type="binding site" evidence="1">
    <location>
        <position position="212"/>
    </location>
    <ligand>
        <name>ATP</name>
        <dbReference type="ChEBI" id="CHEBI:30616"/>
    </ligand>
</feature>
<feature type="site" description="RNA-binding 2" evidence="1">
    <location>
        <position position="326"/>
    </location>
</feature>
<protein>
    <recommendedName>
        <fullName evidence="1">Transcription termination factor Rho</fullName>
        <ecNumber evidence="1">3.6.4.-</ecNumber>
    </recommendedName>
    <alternativeName>
        <fullName evidence="1">ATP-dependent helicase Rho</fullName>
    </alternativeName>
</protein>
<sequence length="419" mass="46993">MNLTELKNTPVSELITLGESMGLENLARMRKQDIIFAILKQHAKSGEDIFGDGVLEILQDGFGFLRSADSSYLAGPDDIYVSPSQIRRFNLRTGDTISGKIRPPKEGERYFALLKVNEVNYDKPENARNKILFENLTPLHANSRLRMERGNGSTEDLTARVLDLASPIGRGQRGLIVAPPKAGKTMLLQNIAQSIAYNHPDCVLMVLLIDERPEEVTEMQRLVKGEVVASTFDEPASRHVQVAEMVIEKAKRLVEHKKDVIILLDSITRLARAYNTVVPASGKVLTGGVDANALHRPKRFFGAARNVEEGGSLTIIATALIDTGSKMDEVIYEEFKGTGNMELHLSRKIAEKRVFPAIDYNRSGTRKEELLTTQEELQKMWILRKIIHPMGEIDAMEFLINKLAMTKTNDDFFEMMKRS</sequence>